<accession>A4RPY8</accession>
<accession>G4MP00</accession>
<comment type="function">
    <text evidence="1">Vacuolar carboxypeptidase involved in degradation of small peptides. Digests preferentially peptides containing an aliphatic or hydrophobic residue in P1' position, as well as methionine, leucine or phenylalanine in P1 position of ester substrate (By similarity).</text>
</comment>
<comment type="catalytic activity">
    <reaction evidence="3">
        <text>Release of a C-terminal amino acid with broad specificity.</text>
        <dbReference type="EC" id="3.4.16.5"/>
    </reaction>
</comment>
<comment type="subcellular location">
    <subcellularLocation>
        <location evidence="1">Vacuole</location>
    </subcellularLocation>
</comment>
<comment type="similarity">
    <text evidence="4">Belongs to the peptidase S10 family.</text>
</comment>
<organism>
    <name type="scientific">Pyricularia oryzae (strain 70-15 / ATCC MYA-4617 / FGSC 8958)</name>
    <name type="common">Rice blast fungus</name>
    <name type="synonym">Magnaporthe oryzae</name>
    <dbReference type="NCBI Taxonomy" id="242507"/>
    <lineage>
        <taxon>Eukaryota</taxon>
        <taxon>Fungi</taxon>
        <taxon>Dikarya</taxon>
        <taxon>Ascomycota</taxon>
        <taxon>Pezizomycotina</taxon>
        <taxon>Sordariomycetes</taxon>
        <taxon>Sordariomycetidae</taxon>
        <taxon>Magnaporthales</taxon>
        <taxon>Pyriculariaceae</taxon>
        <taxon>Pyricularia</taxon>
    </lineage>
</organism>
<protein>
    <recommendedName>
        <fullName>Carboxypeptidase Y homolog A</fullName>
        <ecNumber>3.4.16.5</ecNumber>
    </recommendedName>
</protein>
<proteinExistence type="inferred from homology"/>
<dbReference type="EC" id="3.4.16.5"/>
<dbReference type="EMBL" id="CM001231">
    <property type="protein sequence ID" value="EHA57949.1"/>
    <property type="molecule type" value="Genomic_DNA"/>
</dbReference>
<dbReference type="RefSeq" id="XP_003710561.1">
    <property type="nucleotide sequence ID" value="XM_003710513.1"/>
</dbReference>
<dbReference type="SMR" id="A4RPY8"/>
<dbReference type="FunCoup" id="A4RPY8">
    <property type="interactions" value="851"/>
</dbReference>
<dbReference type="STRING" id="242507.A4RPY8"/>
<dbReference type="ESTHER" id="mago7-cbpya">
    <property type="family name" value="Carboxypeptidase_S10"/>
</dbReference>
<dbReference type="MEROPS" id="S10.001"/>
<dbReference type="GlyCosmos" id="A4RPY8">
    <property type="glycosylation" value="2 sites, No reported glycans"/>
</dbReference>
<dbReference type="EnsemblFungi" id="MGG_05663T0">
    <property type="protein sequence ID" value="MGG_05663T0"/>
    <property type="gene ID" value="MGG_05663"/>
</dbReference>
<dbReference type="GeneID" id="2676004"/>
<dbReference type="KEGG" id="mgr:MGG_05663"/>
<dbReference type="VEuPathDB" id="FungiDB:MGG_05663"/>
<dbReference type="eggNOG" id="KOG1282">
    <property type="taxonomic scope" value="Eukaryota"/>
</dbReference>
<dbReference type="HOGENOM" id="CLU_008523_10_4_1"/>
<dbReference type="InParanoid" id="A4RPY8"/>
<dbReference type="OMA" id="GDWMKPF"/>
<dbReference type="OrthoDB" id="443318at2759"/>
<dbReference type="Proteomes" id="UP000009058">
    <property type="component" value="Chromosome 1"/>
</dbReference>
<dbReference type="GO" id="GO:0000324">
    <property type="term" value="C:fungal-type vacuole"/>
    <property type="evidence" value="ECO:0007669"/>
    <property type="project" value="TreeGrafter"/>
</dbReference>
<dbReference type="GO" id="GO:0004185">
    <property type="term" value="F:serine-type carboxypeptidase activity"/>
    <property type="evidence" value="ECO:0007669"/>
    <property type="project" value="UniProtKB-EC"/>
</dbReference>
<dbReference type="GO" id="GO:0006508">
    <property type="term" value="P:proteolysis"/>
    <property type="evidence" value="ECO:0007669"/>
    <property type="project" value="UniProtKB-KW"/>
</dbReference>
<dbReference type="FunFam" id="1.10.287.410:FF:000001">
    <property type="entry name" value="Carboxypeptidase Y"/>
    <property type="match status" value="1"/>
</dbReference>
<dbReference type="Gene3D" id="1.10.287.410">
    <property type="match status" value="1"/>
</dbReference>
<dbReference type="Gene3D" id="3.40.50.1820">
    <property type="entry name" value="alpha/beta hydrolase"/>
    <property type="match status" value="1"/>
</dbReference>
<dbReference type="InterPro" id="IPR029058">
    <property type="entry name" value="AB_hydrolase_fold"/>
</dbReference>
<dbReference type="InterPro" id="IPR001563">
    <property type="entry name" value="Peptidase_S10"/>
</dbReference>
<dbReference type="InterPro" id="IPR008442">
    <property type="entry name" value="Propeptide_carboxypepY"/>
</dbReference>
<dbReference type="InterPro" id="IPR018202">
    <property type="entry name" value="Ser_caboxypep_ser_AS"/>
</dbReference>
<dbReference type="PANTHER" id="PTHR11802:SF113">
    <property type="entry name" value="SERINE CARBOXYPEPTIDASE CTSA-4.1"/>
    <property type="match status" value="1"/>
</dbReference>
<dbReference type="PANTHER" id="PTHR11802">
    <property type="entry name" value="SERINE PROTEASE FAMILY S10 SERINE CARBOXYPEPTIDASE"/>
    <property type="match status" value="1"/>
</dbReference>
<dbReference type="Pfam" id="PF05388">
    <property type="entry name" value="Carbpep_Y_N"/>
    <property type="match status" value="1"/>
</dbReference>
<dbReference type="Pfam" id="PF00450">
    <property type="entry name" value="Peptidase_S10"/>
    <property type="match status" value="1"/>
</dbReference>
<dbReference type="PRINTS" id="PR00724">
    <property type="entry name" value="CRBOXYPTASEC"/>
</dbReference>
<dbReference type="SUPFAM" id="SSF53474">
    <property type="entry name" value="alpha/beta-Hydrolases"/>
    <property type="match status" value="1"/>
</dbReference>
<dbReference type="PROSITE" id="PS00131">
    <property type="entry name" value="CARBOXYPEPT_SER_SER"/>
    <property type="match status" value="1"/>
</dbReference>
<reference key="1">
    <citation type="journal article" date="2005" name="Nature">
        <title>The genome sequence of the rice blast fungus Magnaporthe grisea.</title>
        <authorList>
            <person name="Dean R.A."/>
            <person name="Talbot N.J."/>
            <person name="Ebbole D.J."/>
            <person name="Farman M.L."/>
            <person name="Mitchell T.K."/>
            <person name="Orbach M.J."/>
            <person name="Thon M.R."/>
            <person name="Kulkarni R."/>
            <person name="Xu J.-R."/>
            <person name="Pan H."/>
            <person name="Read N.D."/>
            <person name="Lee Y.-H."/>
            <person name="Carbone I."/>
            <person name="Brown D."/>
            <person name="Oh Y.Y."/>
            <person name="Donofrio N."/>
            <person name="Jeong J.S."/>
            <person name="Soanes D.M."/>
            <person name="Djonovic S."/>
            <person name="Kolomiets E."/>
            <person name="Rehmeyer C."/>
            <person name="Li W."/>
            <person name="Harding M."/>
            <person name="Kim S."/>
            <person name="Lebrun M.-H."/>
            <person name="Bohnert H."/>
            <person name="Coughlan S."/>
            <person name="Butler J."/>
            <person name="Calvo S.E."/>
            <person name="Ma L.-J."/>
            <person name="Nicol R."/>
            <person name="Purcell S."/>
            <person name="Nusbaum C."/>
            <person name="Galagan J.E."/>
            <person name="Birren B.W."/>
        </authorList>
    </citation>
    <scope>NUCLEOTIDE SEQUENCE [LARGE SCALE GENOMIC DNA]</scope>
    <source>
        <strain>70-15 / ATCC MYA-4617 / FGSC 8958</strain>
    </source>
</reference>
<name>CBPYA_PYRO7</name>
<gene>
    <name type="primary">CPYA</name>
    <name type="ORF">MGG_05663</name>
</gene>
<feature type="signal peptide" evidence="2">
    <location>
        <begin position="1"/>
        <end position="18"/>
    </location>
</feature>
<feature type="propeptide" id="PRO_0000407453" evidence="1">
    <location>
        <begin position="19"/>
        <end position="133"/>
    </location>
</feature>
<feature type="chain" id="PRO_0000407454" description="Carboxypeptidase Y homolog A">
    <location>
        <begin position="134"/>
        <end position="552"/>
    </location>
</feature>
<feature type="active site" evidence="3">
    <location>
        <position position="274"/>
    </location>
</feature>
<feature type="active site" evidence="3">
    <location>
        <position position="466"/>
    </location>
</feature>
<feature type="active site" evidence="3">
    <location>
        <position position="527"/>
    </location>
</feature>
<feature type="glycosylation site" description="N-linked (GlcNAc...) asparagine" evidence="2">
    <location>
        <position position="218"/>
    </location>
</feature>
<feature type="glycosylation site" description="N-linked (GlcNAc...) asparagine" evidence="2">
    <location>
        <position position="516"/>
    </location>
</feature>
<feature type="disulfide bond" evidence="1">
    <location>
        <begin position="187"/>
        <end position="427"/>
    </location>
</feature>
<feature type="disulfide bond" evidence="1">
    <location>
        <begin position="321"/>
        <end position="335"/>
    </location>
</feature>
<feature type="disulfide bond" evidence="1">
    <location>
        <begin position="345"/>
        <end position="368"/>
    </location>
</feature>
<feature type="disulfide bond" evidence="1">
    <location>
        <begin position="352"/>
        <end position="361"/>
    </location>
</feature>
<feature type="disulfide bond" evidence="1">
    <location>
        <begin position="390"/>
        <end position="397"/>
    </location>
</feature>
<evidence type="ECO:0000250" key="1"/>
<evidence type="ECO:0000255" key="2"/>
<evidence type="ECO:0000255" key="3">
    <source>
        <dbReference type="PROSITE-ProRule" id="PRU10074"/>
    </source>
</evidence>
<evidence type="ECO:0000305" key="4"/>
<sequence>MRIATSTLLVGAASAAFAPQDGTQRVLNGFDSIKSAAHSIQKPLQTFEEAMASMTSEAKANWDHLKLLVPDAEEQAKTFFPKKPKPASRKPDSAWDHIVKGADIQAMWVEGATPEETHRKIDGKLDNYNLRARSVDPSKLGVDTVKQYSGYLDDEANDKHLFYWFFESRNDPKNDPVVLWLNGGPGCSSLTGLLFELGPGAINAKIEIVHNPYAWNNNASVIFLDQPVNVGYSYSGGSVSNTVAAGKDIYALLTLFFHQFPEYAKQDFHIAGESYAGHYIPVFASEILSHKKRNINLKSVLIGNGLTDGLTQYEYYRPMACGEGGWKAVLSESECQAMDNALPRCQSMIQNCYDSGSVWSCVPASIYCNNAMIGPYQRTGRNVYDIRGPCKDSGNLCYPELGYISEYLNRREVMEALGAEVSSYDSCNFDINRNFLFQGDWMQPYHRLVPELLNQIPVLIYAGDADFICNWLGNQGWTEALEWKGKKDYNRADYSPLTLASAHDVKPYGKVKSSGNFTFMKIFEAGHMVPYDQAEPSVDFVNRWLAGEWFAA</sequence>
<keyword id="KW-0121">Carboxypeptidase</keyword>
<keyword id="KW-1015">Disulfide bond</keyword>
<keyword id="KW-0325">Glycoprotein</keyword>
<keyword id="KW-0378">Hydrolase</keyword>
<keyword id="KW-0645">Protease</keyword>
<keyword id="KW-1185">Reference proteome</keyword>
<keyword id="KW-0732">Signal</keyword>
<keyword id="KW-0926">Vacuole</keyword>
<keyword id="KW-0865">Zymogen</keyword>